<organism>
    <name type="scientific">Streptococcus pyogenes serotype M3 (strain SSI-1)</name>
    <dbReference type="NCBI Taxonomy" id="193567"/>
    <lineage>
        <taxon>Bacteria</taxon>
        <taxon>Bacillati</taxon>
        <taxon>Bacillota</taxon>
        <taxon>Bacilli</taxon>
        <taxon>Lactobacillales</taxon>
        <taxon>Streptococcaceae</taxon>
        <taxon>Streptococcus</taxon>
    </lineage>
</organism>
<protein>
    <recommendedName>
        <fullName evidence="1">Small ribosomal subunit protein uS5</fullName>
    </recommendedName>
    <alternativeName>
        <fullName evidence="2">30S ribosomal protein S5</fullName>
    </alternativeName>
</protein>
<comment type="function">
    <text evidence="1">With S4 and S12 plays an important role in translational accuracy.</text>
</comment>
<comment type="function">
    <text evidence="1">Located at the back of the 30S subunit body where it stabilizes the conformation of the head with respect to the body.</text>
</comment>
<comment type="subunit">
    <text evidence="1">Part of the 30S ribosomal subunit. Contacts proteins S4 and S8.</text>
</comment>
<comment type="domain">
    <text>The N-terminal domain interacts with the head of the 30S subunit; the C-terminal domain interacts with the body and contacts protein S4. The interaction surface between S4 and S5 is involved in control of translational fidelity.</text>
</comment>
<comment type="similarity">
    <text evidence="1">Belongs to the universal ribosomal protein uS5 family.</text>
</comment>
<keyword id="KW-0687">Ribonucleoprotein</keyword>
<keyword id="KW-0689">Ribosomal protein</keyword>
<keyword id="KW-0694">RNA-binding</keyword>
<keyword id="KW-0699">rRNA-binding</keyword>
<reference key="1">
    <citation type="journal article" date="2003" name="Genome Res.">
        <title>Genome sequence of an M3 strain of Streptococcus pyogenes reveals a large-scale genomic rearrangement in invasive strains and new insights into phage evolution.</title>
        <authorList>
            <person name="Nakagawa I."/>
            <person name="Kurokawa K."/>
            <person name="Yamashita A."/>
            <person name="Nakata M."/>
            <person name="Tomiyasu Y."/>
            <person name="Okahashi N."/>
            <person name="Kawabata S."/>
            <person name="Yamazaki K."/>
            <person name="Shiba T."/>
            <person name="Yasunaga T."/>
            <person name="Hayashi H."/>
            <person name="Hattori M."/>
            <person name="Hamada S."/>
        </authorList>
    </citation>
    <scope>NUCLEOTIDE SEQUENCE [LARGE SCALE GENOMIC DNA]</scope>
    <source>
        <strain>SSI-1</strain>
    </source>
</reference>
<name>RS5_STRPQ</name>
<feature type="chain" id="PRO_0000411537" description="Small ribosomal subunit protein uS5">
    <location>
        <begin position="1"/>
        <end position="164"/>
    </location>
</feature>
<feature type="domain" description="S5 DRBM" evidence="1">
    <location>
        <begin position="10"/>
        <end position="73"/>
    </location>
</feature>
<dbReference type="EMBL" id="BA000034">
    <property type="protein sequence ID" value="BAC63154.1"/>
    <property type="molecule type" value="Genomic_DNA"/>
</dbReference>
<dbReference type="RefSeq" id="WP_002986625.1">
    <property type="nucleotide sequence ID" value="NC_004606.1"/>
</dbReference>
<dbReference type="SMR" id="P0DE95"/>
<dbReference type="GeneID" id="69900043"/>
<dbReference type="KEGG" id="sps:SPs0059"/>
<dbReference type="HOGENOM" id="CLU_065898_2_2_9"/>
<dbReference type="GO" id="GO:0015935">
    <property type="term" value="C:small ribosomal subunit"/>
    <property type="evidence" value="ECO:0007669"/>
    <property type="project" value="InterPro"/>
</dbReference>
<dbReference type="GO" id="GO:0019843">
    <property type="term" value="F:rRNA binding"/>
    <property type="evidence" value="ECO:0007669"/>
    <property type="project" value="UniProtKB-UniRule"/>
</dbReference>
<dbReference type="GO" id="GO:0003735">
    <property type="term" value="F:structural constituent of ribosome"/>
    <property type="evidence" value="ECO:0007669"/>
    <property type="project" value="InterPro"/>
</dbReference>
<dbReference type="GO" id="GO:0006412">
    <property type="term" value="P:translation"/>
    <property type="evidence" value="ECO:0007669"/>
    <property type="project" value="UniProtKB-UniRule"/>
</dbReference>
<dbReference type="FunFam" id="3.30.160.20:FF:000001">
    <property type="entry name" value="30S ribosomal protein S5"/>
    <property type="match status" value="1"/>
</dbReference>
<dbReference type="FunFam" id="3.30.230.10:FF:000002">
    <property type="entry name" value="30S ribosomal protein S5"/>
    <property type="match status" value="1"/>
</dbReference>
<dbReference type="Gene3D" id="3.30.160.20">
    <property type="match status" value="1"/>
</dbReference>
<dbReference type="Gene3D" id="3.30.230.10">
    <property type="match status" value="1"/>
</dbReference>
<dbReference type="HAMAP" id="MF_01307_B">
    <property type="entry name" value="Ribosomal_uS5_B"/>
    <property type="match status" value="1"/>
</dbReference>
<dbReference type="InterPro" id="IPR020568">
    <property type="entry name" value="Ribosomal_Su5_D2-typ_SF"/>
</dbReference>
<dbReference type="InterPro" id="IPR000851">
    <property type="entry name" value="Ribosomal_uS5"/>
</dbReference>
<dbReference type="InterPro" id="IPR005712">
    <property type="entry name" value="Ribosomal_uS5_bac-type"/>
</dbReference>
<dbReference type="InterPro" id="IPR005324">
    <property type="entry name" value="Ribosomal_uS5_C"/>
</dbReference>
<dbReference type="InterPro" id="IPR013810">
    <property type="entry name" value="Ribosomal_uS5_N"/>
</dbReference>
<dbReference type="InterPro" id="IPR018192">
    <property type="entry name" value="Ribosomal_uS5_N_CS"/>
</dbReference>
<dbReference type="InterPro" id="IPR014721">
    <property type="entry name" value="Ribsml_uS5_D2-typ_fold_subgr"/>
</dbReference>
<dbReference type="NCBIfam" id="TIGR01021">
    <property type="entry name" value="rpsE_bact"/>
    <property type="match status" value="1"/>
</dbReference>
<dbReference type="PANTHER" id="PTHR48277">
    <property type="entry name" value="MITOCHONDRIAL RIBOSOMAL PROTEIN S5"/>
    <property type="match status" value="1"/>
</dbReference>
<dbReference type="PANTHER" id="PTHR48277:SF1">
    <property type="entry name" value="MITOCHONDRIAL RIBOSOMAL PROTEIN S5"/>
    <property type="match status" value="1"/>
</dbReference>
<dbReference type="Pfam" id="PF00333">
    <property type="entry name" value="Ribosomal_S5"/>
    <property type="match status" value="1"/>
</dbReference>
<dbReference type="Pfam" id="PF03719">
    <property type="entry name" value="Ribosomal_S5_C"/>
    <property type="match status" value="1"/>
</dbReference>
<dbReference type="SUPFAM" id="SSF54768">
    <property type="entry name" value="dsRNA-binding domain-like"/>
    <property type="match status" value="1"/>
</dbReference>
<dbReference type="SUPFAM" id="SSF54211">
    <property type="entry name" value="Ribosomal protein S5 domain 2-like"/>
    <property type="match status" value="1"/>
</dbReference>
<dbReference type="PROSITE" id="PS00585">
    <property type="entry name" value="RIBOSOMAL_S5"/>
    <property type="match status" value="1"/>
</dbReference>
<dbReference type="PROSITE" id="PS50881">
    <property type="entry name" value="S5_DSRBD"/>
    <property type="match status" value="1"/>
</dbReference>
<proteinExistence type="inferred from homology"/>
<gene>
    <name evidence="1" type="primary">rpsE</name>
    <name type="ordered locus">SPs0059</name>
</gene>
<evidence type="ECO:0000255" key="1">
    <source>
        <dbReference type="HAMAP-Rule" id="MF_01307"/>
    </source>
</evidence>
<evidence type="ECO:0000305" key="2"/>
<sequence length="164" mass="17028">MAFKDNAVELEERVVAINRVTKVVKGGRRLRFAALVVVGDGNGRVGFGTGKAQEVPEAIRKAVEAAKKNMIEVPMVGTTIPHEVYTNFGGAKVLLKPAVEGSGVAAGGAVRAVIELAGVADITSKSLGSNTPINIVRATVEGLKQLKRAEEVAALRGISVSDLA</sequence>
<accession>P0DE95</accession>
<accession>P66584</accession>
<accession>Q9A1V7</accession>